<feature type="chain" id="PRO_0000258940" description="Oxygen-dependent choline dehydrogenase">
    <location>
        <begin position="1"/>
        <end position="567"/>
    </location>
</feature>
<feature type="active site" description="Proton acceptor" evidence="1">
    <location>
        <position position="473"/>
    </location>
</feature>
<feature type="binding site" evidence="1">
    <location>
        <begin position="4"/>
        <end position="33"/>
    </location>
    <ligand>
        <name>FAD</name>
        <dbReference type="ChEBI" id="CHEBI:57692"/>
    </ligand>
</feature>
<comment type="function">
    <text evidence="1">Involved in the biosynthesis of the osmoprotectant glycine betaine. Catalyzes the oxidation of choline to betaine aldehyde and betaine aldehyde to glycine betaine at the same rate.</text>
</comment>
<comment type="catalytic activity">
    <reaction evidence="1">
        <text>choline + A = betaine aldehyde + AH2</text>
        <dbReference type="Rhea" id="RHEA:17433"/>
        <dbReference type="ChEBI" id="CHEBI:13193"/>
        <dbReference type="ChEBI" id="CHEBI:15354"/>
        <dbReference type="ChEBI" id="CHEBI:15710"/>
        <dbReference type="ChEBI" id="CHEBI:17499"/>
        <dbReference type="EC" id="1.1.99.1"/>
    </reaction>
</comment>
<comment type="catalytic activity">
    <reaction evidence="1">
        <text>betaine aldehyde + NAD(+) + H2O = glycine betaine + NADH + 2 H(+)</text>
        <dbReference type="Rhea" id="RHEA:15305"/>
        <dbReference type="ChEBI" id="CHEBI:15377"/>
        <dbReference type="ChEBI" id="CHEBI:15378"/>
        <dbReference type="ChEBI" id="CHEBI:15710"/>
        <dbReference type="ChEBI" id="CHEBI:17750"/>
        <dbReference type="ChEBI" id="CHEBI:57540"/>
        <dbReference type="ChEBI" id="CHEBI:57945"/>
        <dbReference type="EC" id="1.2.1.8"/>
    </reaction>
</comment>
<comment type="cofactor">
    <cofactor evidence="1">
        <name>FAD</name>
        <dbReference type="ChEBI" id="CHEBI:57692"/>
    </cofactor>
</comment>
<comment type="pathway">
    <text evidence="1">Amine and polyamine biosynthesis; betaine biosynthesis via choline pathway; betaine aldehyde from choline (cytochrome c reductase route): step 1/1.</text>
</comment>
<comment type="similarity">
    <text evidence="1">Belongs to the GMC oxidoreductase family.</text>
</comment>
<protein>
    <recommendedName>
        <fullName evidence="1">Oxygen-dependent choline dehydrogenase</fullName>
        <shortName evidence="1">CDH</shortName>
        <shortName evidence="1">CHD</shortName>
        <ecNumber evidence="1">1.1.99.1</ecNumber>
    </recommendedName>
    <alternativeName>
        <fullName evidence="1">Betaine aldehyde dehydrogenase</fullName>
        <shortName evidence="1">BADH</shortName>
        <ecNumber evidence="1">1.2.1.8</ecNumber>
    </alternativeName>
</protein>
<dbReference type="EC" id="1.1.99.1" evidence="1"/>
<dbReference type="EC" id="1.2.1.8" evidence="1"/>
<dbReference type="EMBL" id="CP000305">
    <property type="protein sequence ID" value="ABG19163.1"/>
    <property type="molecule type" value="Genomic_DNA"/>
</dbReference>
<dbReference type="EMBL" id="ACNQ01000017">
    <property type="protein sequence ID" value="EEO75306.1"/>
    <property type="molecule type" value="Genomic_DNA"/>
</dbReference>
<dbReference type="RefSeq" id="WP_002220180.1">
    <property type="nucleotide sequence ID" value="NZ_ACNQ01000017.1"/>
</dbReference>
<dbReference type="SMR" id="Q1CFR7"/>
<dbReference type="GeneID" id="57977304"/>
<dbReference type="KEGG" id="ypn:YPN_2836"/>
<dbReference type="HOGENOM" id="CLU_002865_7_1_6"/>
<dbReference type="UniPathway" id="UPA00529">
    <property type="reaction ID" value="UER00385"/>
</dbReference>
<dbReference type="Proteomes" id="UP000008936">
    <property type="component" value="Chromosome"/>
</dbReference>
<dbReference type="GO" id="GO:0016020">
    <property type="term" value="C:membrane"/>
    <property type="evidence" value="ECO:0007669"/>
    <property type="project" value="TreeGrafter"/>
</dbReference>
<dbReference type="GO" id="GO:0008802">
    <property type="term" value="F:betaine-aldehyde dehydrogenase (NAD+) activity"/>
    <property type="evidence" value="ECO:0007669"/>
    <property type="project" value="UniProtKB-EC"/>
</dbReference>
<dbReference type="GO" id="GO:0008812">
    <property type="term" value="F:choline dehydrogenase activity"/>
    <property type="evidence" value="ECO:0007669"/>
    <property type="project" value="UniProtKB-UniRule"/>
</dbReference>
<dbReference type="GO" id="GO:0050660">
    <property type="term" value="F:flavin adenine dinucleotide binding"/>
    <property type="evidence" value="ECO:0007669"/>
    <property type="project" value="InterPro"/>
</dbReference>
<dbReference type="GO" id="GO:0019285">
    <property type="term" value="P:glycine betaine biosynthetic process from choline"/>
    <property type="evidence" value="ECO:0007669"/>
    <property type="project" value="UniProtKB-UniRule"/>
</dbReference>
<dbReference type="Gene3D" id="3.50.50.60">
    <property type="entry name" value="FAD/NAD(P)-binding domain"/>
    <property type="match status" value="1"/>
</dbReference>
<dbReference type="Gene3D" id="3.30.560.10">
    <property type="entry name" value="Glucose Oxidase, domain 3"/>
    <property type="match status" value="1"/>
</dbReference>
<dbReference type="HAMAP" id="MF_00750">
    <property type="entry name" value="Choline_dehydrogen"/>
    <property type="match status" value="1"/>
</dbReference>
<dbReference type="InterPro" id="IPR011533">
    <property type="entry name" value="BetA"/>
</dbReference>
<dbReference type="InterPro" id="IPR036188">
    <property type="entry name" value="FAD/NAD-bd_sf"/>
</dbReference>
<dbReference type="InterPro" id="IPR012132">
    <property type="entry name" value="GMC_OxRdtase"/>
</dbReference>
<dbReference type="InterPro" id="IPR000172">
    <property type="entry name" value="GMC_OxRdtase_N"/>
</dbReference>
<dbReference type="InterPro" id="IPR007867">
    <property type="entry name" value="GMC_OxRtase_C"/>
</dbReference>
<dbReference type="NCBIfam" id="TIGR01810">
    <property type="entry name" value="betA"/>
    <property type="match status" value="1"/>
</dbReference>
<dbReference type="NCBIfam" id="NF002550">
    <property type="entry name" value="PRK02106.1"/>
    <property type="match status" value="1"/>
</dbReference>
<dbReference type="PANTHER" id="PTHR11552:SF147">
    <property type="entry name" value="CHOLINE DEHYDROGENASE, MITOCHONDRIAL"/>
    <property type="match status" value="1"/>
</dbReference>
<dbReference type="PANTHER" id="PTHR11552">
    <property type="entry name" value="GLUCOSE-METHANOL-CHOLINE GMC OXIDOREDUCTASE"/>
    <property type="match status" value="1"/>
</dbReference>
<dbReference type="Pfam" id="PF05199">
    <property type="entry name" value="GMC_oxred_C"/>
    <property type="match status" value="1"/>
</dbReference>
<dbReference type="Pfam" id="PF00732">
    <property type="entry name" value="GMC_oxred_N"/>
    <property type="match status" value="1"/>
</dbReference>
<dbReference type="PIRSF" id="PIRSF000137">
    <property type="entry name" value="Alcohol_oxidase"/>
    <property type="match status" value="1"/>
</dbReference>
<dbReference type="SUPFAM" id="SSF54373">
    <property type="entry name" value="FAD-linked reductases, C-terminal domain"/>
    <property type="match status" value="1"/>
</dbReference>
<dbReference type="SUPFAM" id="SSF51905">
    <property type="entry name" value="FAD/NAD(P)-binding domain"/>
    <property type="match status" value="1"/>
</dbReference>
<dbReference type="PROSITE" id="PS00623">
    <property type="entry name" value="GMC_OXRED_1"/>
    <property type="match status" value="1"/>
</dbReference>
<dbReference type="PROSITE" id="PS00624">
    <property type="entry name" value="GMC_OXRED_2"/>
    <property type="match status" value="1"/>
</dbReference>
<keyword id="KW-0274">FAD</keyword>
<keyword id="KW-0285">Flavoprotein</keyword>
<keyword id="KW-0520">NAD</keyword>
<keyword id="KW-0560">Oxidoreductase</keyword>
<proteinExistence type="inferred from homology"/>
<accession>Q1CFR7</accession>
<accession>C4GWK6</accession>
<evidence type="ECO:0000255" key="1">
    <source>
        <dbReference type="HAMAP-Rule" id="MF_00750"/>
    </source>
</evidence>
<organism>
    <name type="scientific">Yersinia pestis bv. Antiqua (strain Nepal516)</name>
    <dbReference type="NCBI Taxonomy" id="377628"/>
    <lineage>
        <taxon>Bacteria</taxon>
        <taxon>Pseudomonadati</taxon>
        <taxon>Pseudomonadota</taxon>
        <taxon>Gammaproteobacteria</taxon>
        <taxon>Enterobacterales</taxon>
        <taxon>Yersiniaceae</taxon>
        <taxon>Yersinia</taxon>
    </lineage>
</organism>
<sequence>MEYDYIIIGAGSAGNVLAARLTEDADVTVLLLEAGGPDYRLDFRTQMPAALAFPLQGKRYNWAYETDPEPHMNNRRMECGRGKGLGGSSLINGMCYIRGNAMDFDHWASLSGLEDWSYLDCLPYFRKAETRDIGPNDFHGGEGPVSVTTPKIGNNPLFHAMVAAGVQAGYPRTDDLNGYQQEGFGPMDRTVTPKGRRASTARGYLDQARPRNNLTIITHALTDRILFEGKRATGVRYLKGDAGTGQTAYARREVLLCGGAIASPQILQRSGIGPAELLQRLDIPLVQALPGVGENLQDHLEMYLQYSCKQPVSLYPALLWFNQPKIGIEWLFNGTGVGASNQFEAGGFIRSRDAFTWPNIQYHFLPVAINYNGSNAVKEHGFQAHVGSMRSPSRGRIQVKSKDPRQHPSILFNYMSSEQDWHEFRDAIRITREIIAQPALDPYRGREISPGANVQNDDELDAFIREHAETAYHPSCSCKMGDDKMAVVDGQGRVHGVQGLRVVDASIMPQIITGNLNATTIMIAEKIADRIRGCQPLAKSNAAYFIAGDTPARTSPVRHSLPVTSYP</sequence>
<gene>
    <name evidence="1" type="primary">betA</name>
    <name type="ordered locus">YPN_2836</name>
    <name type="ORF">YP516_3206</name>
</gene>
<name>BETA_YERPN</name>
<reference key="1">
    <citation type="journal article" date="2006" name="J. Bacteriol.">
        <title>Complete genome sequence of Yersinia pestis strains Antiqua and Nepal516: evidence of gene reduction in an emerging pathogen.</title>
        <authorList>
            <person name="Chain P.S.G."/>
            <person name="Hu P."/>
            <person name="Malfatti S.A."/>
            <person name="Radnedge L."/>
            <person name="Larimer F."/>
            <person name="Vergez L.M."/>
            <person name="Worsham P."/>
            <person name="Chu M.C."/>
            <person name="Andersen G.L."/>
        </authorList>
    </citation>
    <scope>NUCLEOTIDE SEQUENCE [LARGE SCALE GENOMIC DNA]</scope>
    <source>
        <strain>Nepal516</strain>
    </source>
</reference>
<reference key="2">
    <citation type="submission" date="2009-04" db="EMBL/GenBank/DDBJ databases">
        <title>Yersinia pestis Nepal516A whole genome shotgun sequencing project.</title>
        <authorList>
            <person name="Plunkett G. III"/>
            <person name="Anderson B.D."/>
            <person name="Baumler D.J."/>
            <person name="Burland V."/>
            <person name="Cabot E.L."/>
            <person name="Glasner J.D."/>
            <person name="Mau B."/>
            <person name="Neeno-Eckwall E."/>
            <person name="Perna N.T."/>
            <person name="Munk A.C."/>
            <person name="Tapia R."/>
            <person name="Green L.D."/>
            <person name="Rogers Y.C."/>
            <person name="Detter J.C."/>
            <person name="Bruce D.C."/>
            <person name="Brettin T.S."/>
        </authorList>
    </citation>
    <scope>NUCLEOTIDE SEQUENCE [LARGE SCALE GENOMIC DNA]</scope>
    <source>
        <strain>Nepal516</strain>
    </source>
</reference>